<organism>
    <name type="scientific">Cereibacter sphaeroides (strain ATCC 17023 / DSM 158 / JCM 6121 / CCUG 31486 / LMG 2827 / NBRC 12203 / NCIMB 8253 / ATH 2.4.1.)</name>
    <name type="common">Rhodobacter sphaeroides</name>
    <dbReference type="NCBI Taxonomy" id="272943"/>
    <lineage>
        <taxon>Bacteria</taxon>
        <taxon>Pseudomonadati</taxon>
        <taxon>Pseudomonadota</taxon>
        <taxon>Alphaproteobacteria</taxon>
        <taxon>Rhodobacterales</taxon>
        <taxon>Paracoccaceae</taxon>
        <taxon>Cereibacter</taxon>
    </lineage>
</organism>
<proteinExistence type="inferred from homology"/>
<feature type="chain" id="PRO_0000241961" description="Malate dehydrogenase">
    <location>
        <begin position="1"/>
        <end position="320"/>
    </location>
</feature>
<feature type="active site" description="Proton acceptor" evidence="1">
    <location>
        <position position="176"/>
    </location>
</feature>
<feature type="binding site" evidence="1">
    <location>
        <begin position="10"/>
        <end position="15"/>
    </location>
    <ligand>
        <name>NAD(+)</name>
        <dbReference type="ChEBI" id="CHEBI:57540"/>
    </ligand>
</feature>
<feature type="binding site" evidence="1">
    <location>
        <position position="34"/>
    </location>
    <ligand>
        <name>NAD(+)</name>
        <dbReference type="ChEBI" id="CHEBI:57540"/>
    </ligand>
</feature>
<feature type="binding site" evidence="1">
    <location>
        <position position="83"/>
    </location>
    <ligand>
        <name>substrate</name>
    </ligand>
</feature>
<feature type="binding site" evidence="1">
    <location>
        <position position="89"/>
    </location>
    <ligand>
        <name>substrate</name>
    </ligand>
</feature>
<feature type="binding site" evidence="1">
    <location>
        <position position="96"/>
    </location>
    <ligand>
        <name>NAD(+)</name>
        <dbReference type="ChEBI" id="CHEBI:57540"/>
    </ligand>
</feature>
<feature type="binding site" evidence="1">
    <location>
        <begin position="119"/>
        <end position="121"/>
    </location>
    <ligand>
        <name>NAD(+)</name>
        <dbReference type="ChEBI" id="CHEBI:57540"/>
    </ligand>
</feature>
<feature type="binding site" evidence="1">
    <location>
        <position position="121"/>
    </location>
    <ligand>
        <name>substrate</name>
    </ligand>
</feature>
<feature type="binding site" evidence="1">
    <location>
        <position position="152"/>
    </location>
    <ligand>
        <name>substrate</name>
    </ligand>
</feature>
<reference key="1">
    <citation type="submission" date="2005-09" db="EMBL/GenBank/DDBJ databases">
        <title>Complete sequence of chromosome 1 of Rhodobacter sphaeroides 2.4.1.</title>
        <authorList>
            <person name="Copeland A."/>
            <person name="Lucas S."/>
            <person name="Lapidus A."/>
            <person name="Barry K."/>
            <person name="Detter J.C."/>
            <person name="Glavina T."/>
            <person name="Hammon N."/>
            <person name="Israni S."/>
            <person name="Pitluck S."/>
            <person name="Richardson P."/>
            <person name="Mackenzie C."/>
            <person name="Choudhary M."/>
            <person name="Larimer F."/>
            <person name="Hauser L.J."/>
            <person name="Land M."/>
            <person name="Donohue T.J."/>
            <person name="Kaplan S."/>
        </authorList>
    </citation>
    <scope>NUCLEOTIDE SEQUENCE [LARGE SCALE GENOMIC DNA]</scope>
    <source>
        <strain>ATCC 17023 / DSM 158 / JCM 6121 / CCUG 31486 / LMG 2827 / NBRC 12203 / NCIMB 8253 / ATH 2.4.1.</strain>
    </source>
</reference>
<evidence type="ECO:0000255" key="1">
    <source>
        <dbReference type="HAMAP-Rule" id="MF_00487"/>
    </source>
</evidence>
<sequence length="320" mass="33564">MARPKIALIGAGQIGGTLAHLAAIKELGDVVLFDIAEGTPQGKALDIAQSGPSEGFDAVMKGANSYEEIAGADVCIVTAGVPRKPGMSRDDLIGINLKVMKSVGEGIKAHAPNAFVICITNPLDAMVWALQQFSGLPAEKVVGMAGVLDSARFRHFLSVEFNVSMRDVTAFVLGGHGDTMVPLVRYSTVAGIPLPDLVQMGWTTQEKLDQIVQRTRDGGAEIVGLLKTGSAFYAPATSAIEMAEAYLKDQKRLLPCAAYVDGAFGLNGMYVGVPTIIGAGGIEKIVDIKLNDDEQAMFDKSVNAVKGLVEACKGIDSSLA</sequence>
<dbReference type="EC" id="1.1.1.37" evidence="1"/>
<dbReference type="EMBL" id="CP000143">
    <property type="protein sequence ID" value="ABA80151.2"/>
    <property type="molecule type" value="Genomic_DNA"/>
</dbReference>
<dbReference type="RefSeq" id="WP_002721256.1">
    <property type="nucleotide sequence ID" value="NZ_CP030271.1"/>
</dbReference>
<dbReference type="RefSeq" id="YP_354052.4">
    <property type="nucleotide sequence ID" value="NC_007493.2"/>
</dbReference>
<dbReference type="SMR" id="Q3IZ83"/>
<dbReference type="STRING" id="272943.RSP_0968"/>
<dbReference type="EnsemblBacteria" id="ABA80151">
    <property type="protein sequence ID" value="ABA80151"/>
    <property type="gene ID" value="RSP_0968"/>
</dbReference>
<dbReference type="GeneID" id="67447739"/>
<dbReference type="KEGG" id="rsp:RSP_0968"/>
<dbReference type="PATRIC" id="fig|272943.9.peg.2940"/>
<dbReference type="eggNOG" id="COG0039">
    <property type="taxonomic scope" value="Bacteria"/>
</dbReference>
<dbReference type="OrthoDB" id="9802969at2"/>
<dbReference type="Proteomes" id="UP000002703">
    <property type="component" value="Chromosome 1"/>
</dbReference>
<dbReference type="GO" id="GO:0004459">
    <property type="term" value="F:L-lactate dehydrogenase activity"/>
    <property type="evidence" value="ECO:0007669"/>
    <property type="project" value="TreeGrafter"/>
</dbReference>
<dbReference type="GO" id="GO:0030060">
    <property type="term" value="F:L-malate dehydrogenase (NAD+) activity"/>
    <property type="evidence" value="ECO:0007669"/>
    <property type="project" value="UniProtKB-UniRule"/>
</dbReference>
<dbReference type="GO" id="GO:0006089">
    <property type="term" value="P:lactate metabolic process"/>
    <property type="evidence" value="ECO:0007669"/>
    <property type="project" value="TreeGrafter"/>
</dbReference>
<dbReference type="GO" id="GO:0006099">
    <property type="term" value="P:tricarboxylic acid cycle"/>
    <property type="evidence" value="ECO:0007669"/>
    <property type="project" value="UniProtKB-UniRule"/>
</dbReference>
<dbReference type="CDD" id="cd01339">
    <property type="entry name" value="LDH-like_MDH"/>
    <property type="match status" value="1"/>
</dbReference>
<dbReference type="FunFam" id="3.40.50.720:FF:000018">
    <property type="entry name" value="Malate dehydrogenase"/>
    <property type="match status" value="1"/>
</dbReference>
<dbReference type="FunFam" id="3.90.110.10:FF:000004">
    <property type="entry name" value="Malate dehydrogenase"/>
    <property type="match status" value="1"/>
</dbReference>
<dbReference type="Gene3D" id="3.90.110.10">
    <property type="entry name" value="Lactate dehydrogenase/glycoside hydrolase, family 4, C-terminal"/>
    <property type="match status" value="1"/>
</dbReference>
<dbReference type="Gene3D" id="3.40.50.720">
    <property type="entry name" value="NAD(P)-binding Rossmann-like Domain"/>
    <property type="match status" value="1"/>
</dbReference>
<dbReference type="HAMAP" id="MF_00487">
    <property type="entry name" value="Malate_dehydrog_3"/>
    <property type="match status" value="1"/>
</dbReference>
<dbReference type="InterPro" id="IPR001557">
    <property type="entry name" value="L-lactate/malate_DH"/>
</dbReference>
<dbReference type="InterPro" id="IPR022383">
    <property type="entry name" value="Lactate/malate_DH_C"/>
</dbReference>
<dbReference type="InterPro" id="IPR001236">
    <property type="entry name" value="Lactate/malate_DH_N"/>
</dbReference>
<dbReference type="InterPro" id="IPR015955">
    <property type="entry name" value="Lactate_DH/Glyco_Ohase_4_C"/>
</dbReference>
<dbReference type="InterPro" id="IPR011275">
    <property type="entry name" value="Malate_DH_type3"/>
</dbReference>
<dbReference type="InterPro" id="IPR036291">
    <property type="entry name" value="NAD(P)-bd_dom_sf"/>
</dbReference>
<dbReference type="NCBIfam" id="TIGR01763">
    <property type="entry name" value="MalateDH_bact"/>
    <property type="match status" value="1"/>
</dbReference>
<dbReference type="NCBIfam" id="NF004863">
    <property type="entry name" value="PRK06223.1"/>
    <property type="match status" value="1"/>
</dbReference>
<dbReference type="PANTHER" id="PTHR43128">
    <property type="entry name" value="L-2-HYDROXYCARBOXYLATE DEHYDROGENASE (NAD(P)(+))"/>
    <property type="match status" value="1"/>
</dbReference>
<dbReference type="PANTHER" id="PTHR43128:SF16">
    <property type="entry name" value="L-LACTATE DEHYDROGENASE"/>
    <property type="match status" value="1"/>
</dbReference>
<dbReference type="Pfam" id="PF02866">
    <property type="entry name" value="Ldh_1_C"/>
    <property type="match status" value="1"/>
</dbReference>
<dbReference type="Pfam" id="PF00056">
    <property type="entry name" value="Ldh_1_N"/>
    <property type="match status" value="1"/>
</dbReference>
<dbReference type="PIRSF" id="PIRSF000102">
    <property type="entry name" value="Lac_mal_DH"/>
    <property type="match status" value="1"/>
</dbReference>
<dbReference type="PRINTS" id="PR00086">
    <property type="entry name" value="LLDHDRGNASE"/>
</dbReference>
<dbReference type="SUPFAM" id="SSF56327">
    <property type="entry name" value="LDH C-terminal domain-like"/>
    <property type="match status" value="1"/>
</dbReference>
<dbReference type="SUPFAM" id="SSF51735">
    <property type="entry name" value="NAD(P)-binding Rossmann-fold domains"/>
    <property type="match status" value="1"/>
</dbReference>
<accession>Q3IZ83</accession>
<keyword id="KW-0520">NAD</keyword>
<keyword id="KW-0560">Oxidoreductase</keyword>
<keyword id="KW-1185">Reference proteome</keyword>
<keyword id="KW-0816">Tricarboxylic acid cycle</keyword>
<protein>
    <recommendedName>
        <fullName evidence="1">Malate dehydrogenase</fullName>
        <ecNumber evidence="1">1.1.1.37</ecNumber>
    </recommendedName>
</protein>
<name>MDH_CERS4</name>
<gene>
    <name evidence="1" type="primary">mdh</name>
    <name type="ordered locus">RHOS4_25830</name>
    <name type="ORF">RSP_0968</name>
</gene>
<comment type="function">
    <text evidence="1">Catalyzes the reversible oxidation of malate to oxaloacetate.</text>
</comment>
<comment type="catalytic activity">
    <reaction evidence="1">
        <text>(S)-malate + NAD(+) = oxaloacetate + NADH + H(+)</text>
        <dbReference type="Rhea" id="RHEA:21432"/>
        <dbReference type="ChEBI" id="CHEBI:15378"/>
        <dbReference type="ChEBI" id="CHEBI:15589"/>
        <dbReference type="ChEBI" id="CHEBI:16452"/>
        <dbReference type="ChEBI" id="CHEBI:57540"/>
        <dbReference type="ChEBI" id="CHEBI:57945"/>
        <dbReference type="EC" id="1.1.1.37"/>
    </reaction>
</comment>
<comment type="similarity">
    <text evidence="1">Belongs to the LDH/MDH superfamily. MDH type 3 family.</text>
</comment>